<name>OSGL1_RAT</name>
<proteinExistence type="evidence at transcript level"/>
<reference key="1">
    <citation type="journal article" date="2004" name="Genome Res.">
        <title>The status, quality, and expansion of the NIH full-length cDNA project: the Mammalian Gene Collection (MGC).</title>
        <authorList>
            <consortium name="The MGC Project Team"/>
        </authorList>
    </citation>
    <scope>NUCLEOTIDE SEQUENCE [LARGE SCALE MRNA]</scope>
    <source>
        <tissue>Thymus</tissue>
    </source>
</reference>
<reference key="2">
    <citation type="journal article" date="2009" name="Biochem. J.">
        <title>Eukaryotic GCP1 is a conserved mitochondrial protein required for progression of embryo development beyond the globular stage in Arabidopsis thaliana.</title>
        <authorList>
            <person name="Haussuehl K."/>
            <person name="Huesgen P.F."/>
            <person name="Meier M."/>
            <person name="Dessi P."/>
            <person name="Glaser E."/>
            <person name="Adamski J."/>
            <person name="Adamska I."/>
        </authorList>
    </citation>
    <scope>SUBCELLULAR LOCATION</scope>
</reference>
<feature type="transit peptide" description="Mitochondrion" evidence="3">
    <location>
        <begin position="1"/>
        <end position="29"/>
    </location>
</feature>
<feature type="chain" id="PRO_0000307780" description="tRNA N6-adenosine threonylcarbamoyltransferase, mitochondrial">
    <location>
        <begin position="30"/>
        <end position="414"/>
    </location>
</feature>
<feature type="binding site" evidence="3">
    <location>
        <position position="147"/>
    </location>
    <ligand>
        <name>a divalent metal cation</name>
        <dbReference type="ChEBI" id="CHEBI:60240"/>
    </ligand>
</feature>
<feature type="binding site" evidence="3">
    <location>
        <position position="151"/>
    </location>
    <ligand>
        <name>a divalent metal cation</name>
        <dbReference type="ChEBI" id="CHEBI:60240"/>
    </ligand>
</feature>
<feature type="binding site" evidence="3">
    <location>
        <begin position="169"/>
        <end position="173"/>
    </location>
    <ligand>
        <name>substrate</name>
    </ligand>
</feature>
<feature type="binding site" evidence="3">
    <location>
        <position position="202"/>
    </location>
    <ligand>
        <name>substrate</name>
    </ligand>
</feature>
<feature type="binding site" evidence="3">
    <location>
        <position position="222"/>
    </location>
    <ligand>
        <name>substrate</name>
    </ligand>
</feature>
<feature type="binding site" evidence="3">
    <location>
        <position position="226"/>
    </location>
    <ligand>
        <name>substrate</name>
    </ligand>
</feature>
<feature type="binding site" evidence="3">
    <location>
        <begin position="329"/>
        <end position="330"/>
    </location>
    <ligand>
        <name>substrate</name>
    </ligand>
</feature>
<feature type="binding site" evidence="3">
    <location>
        <position position="357"/>
    </location>
    <ligand>
        <name>substrate</name>
    </ligand>
</feature>
<feature type="binding site" evidence="3">
    <location>
        <position position="358"/>
    </location>
    <ligand>
        <name>a divalent metal cation</name>
        <dbReference type="ChEBI" id="CHEBI:60240"/>
    </ligand>
</feature>
<feature type="modified residue" description="N6-acetyllysine" evidence="2">
    <location>
        <position position="74"/>
    </location>
</feature>
<feature type="modified residue" description="N6-acetyllysine" evidence="2">
    <location>
        <position position="140"/>
    </location>
</feature>
<feature type="modified residue" description="N6-acetyllysine" evidence="2">
    <location>
        <position position="203"/>
    </location>
</feature>
<feature type="modified residue" description="N6-acetyllysine" evidence="2">
    <location>
        <position position="230"/>
    </location>
</feature>
<feature type="modified residue" description="N6-acetyllysine" evidence="1">
    <location>
        <position position="299"/>
    </location>
</feature>
<protein>
    <recommendedName>
        <fullName evidence="3">tRNA N6-adenosine threonylcarbamoyltransferase, mitochondrial</fullName>
        <ecNumber evidence="3">2.3.1.234</ecNumber>
    </recommendedName>
    <alternativeName>
        <fullName evidence="3">N6-L-threonylcarbamoyladenine synthase</fullName>
        <shortName evidence="3">t(6)A synthase</shortName>
    </alternativeName>
    <alternativeName>
        <fullName evidence="3">O-sialoglycoprotein endopeptidase-like protein 1</fullName>
    </alternativeName>
    <alternativeName>
        <fullName evidence="3">t(6)A37 threonylcarbamoyladenosine biosynthesis protein Osgepl1</fullName>
    </alternativeName>
    <alternativeName>
        <fullName evidence="3">tRNA threonylcarbamoyladenosine biosynthesis protein Osgepl1</fullName>
    </alternativeName>
</protein>
<accession>Q4V7F3</accession>
<dbReference type="EC" id="2.3.1.234" evidence="3"/>
<dbReference type="EMBL" id="BC097950">
    <property type="protein sequence ID" value="AAH97950.1"/>
    <property type="molecule type" value="mRNA"/>
</dbReference>
<dbReference type="RefSeq" id="NP_001019958.1">
    <property type="nucleotide sequence ID" value="NM_001024787.1"/>
</dbReference>
<dbReference type="RefSeq" id="NP_001380997.1">
    <property type="nucleotide sequence ID" value="NM_001394068.1"/>
</dbReference>
<dbReference type="RefSeq" id="NP_001380999.1">
    <property type="nucleotide sequence ID" value="NM_001394070.1"/>
</dbReference>
<dbReference type="RefSeq" id="XP_017451887.1">
    <property type="nucleotide sequence ID" value="XM_017596398.1"/>
</dbReference>
<dbReference type="RefSeq" id="XP_063123129.1">
    <property type="nucleotide sequence ID" value="XM_063267059.1"/>
</dbReference>
<dbReference type="SMR" id="Q4V7F3"/>
<dbReference type="FunCoup" id="Q4V7F3">
    <property type="interactions" value="2490"/>
</dbReference>
<dbReference type="STRING" id="10116.ENSRNOP00000005408"/>
<dbReference type="PhosphoSitePlus" id="Q4V7F3"/>
<dbReference type="PaxDb" id="10116-ENSRNOP00000005408"/>
<dbReference type="Ensembl" id="ENSRNOT00000005408.6">
    <property type="protein sequence ID" value="ENSRNOP00000005408.4"/>
    <property type="gene ID" value="ENSRNOG00000004001.7"/>
</dbReference>
<dbReference type="GeneID" id="314548"/>
<dbReference type="UCSC" id="RGD:1305575">
    <property type="organism name" value="rat"/>
</dbReference>
<dbReference type="AGR" id="RGD:1305575"/>
<dbReference type="RGD" id="1305575">
    <property type="gene designation" value="Osgepl1"/>
</dbReference>
<dbReference type="eggNOG" id="KOG2707">
    <property type="taxonomic scope" value="Eukaryota"/>
</dbReference>
<dbReference type="GeneTree" id="ENSGT00940000153744"/>
<dbReference type="HOGENOM" id="CLU_023208_1_2_1"/>
<dbReference type="InParanoid" id="Q4V7F3"/>
<dbReference type="PhylomeDB" id="Q4V7F3"/>
<dbReference type="PRO" id="PR:Q4V7F3"/>
<dbReference type="Proteomes" id="UP000002494">
    <property type="component" value="Chromosome 9"/>
</dbReference>
<dbReference type="Bgee" id="ENSRNOG00000004001">
    <property type="expression patterns" value="Expressed in quadriceps femoris and 19 other cell types or tissues"/>
</dbReference>
<dbReference type="GO" id="GO:0005739">
    <property type="term" value="C:mitochondrion"/>
    <property type="evidence" value="ECO:0000250"/>
    <property type="project" value="UniProtKB"/>
</dbReference>
<dbReference type="GO" id="GO:0046872">
    <property type="term" value="F:metal ion binding"/>
    <property type="evidence" value="ECO:0007669"/>
    <property type="project" value="UniProtKB-KW"/>
</dbReference>
<dbReference type="GO" id="GO:0061711">
    <property type="term" value="F:N(6)-L-threonylcarbamoyladenine synthase activity"/>
    <property type="evidence" value="ECO:0000250"/>
    <property type="project" value="UniProtKB"/>
</dbReference>
<dbReference type="GO" id="GO:0002949">
    <property type="term" value="P:tRNA threonylcarbamoyladenosine modification"/>
    <property type="evidence" value="ECO:0000250"/>
    <property type="project" value="UniProtKB"/>
</dbReference>
<dbReference type="CDD" id="cd24134">
    <property type="entry name" value="ASKHA_NBD_OSGEPL1_QRI7_euk"/>
    <property type="match status" value="1"/>
</dbReference>
<dbReference type="FunFam" id="3.30.420.40:FF:000083">
    <property type="entry name" value="Probable tRNA N6-adenosine threonylcarbamoyltransferase, mitochondrial"/>
    <property type="match status" value="1"/>
</dbReference>
<dbReference type="FunFam" id="3.30.420.40:FF:000106">
    <property type="entry name" value="Probable tRNA N6-adenosine threonylcarbamoyltransferase, mitochondrial"/>
    <property type="match status" value="1"/>
</dbReference>
<dbReference type="Gene3D" id="3.30.420.40">
    <property type="match status" value="2"/>
</dbReference>
<dbReference type="HAMAP" id="MF_01445">
    <property type="entry name" value="TsaD"/>
    <property type="match status" value="1"/>
</dbReference>
<dbReference type="InterPro" id="IPR043129">
    <property type="entry name" value="ATPase_NBD"/>
</dbReference>
<dbReference type="InterPro" id="IPR000905">
    <property type="entry name" value="Gcp-like_dom"/>
</dbReference>
<dbReference type="InterPro" id="IPR017861">
    <property type="entry name" value="KAE1/TsaD"/>
</dbReference>
<dbReference type="InterPro" id="IPR022450">
    <property type="entry name" value="TsaD"/>
</dbReference>
<dbReference type="NCBIfam" id="TIGR00329">
    <property type="entry name" value="gcp_kae1"/>
    <property type="match status" value="1"/>
</dbReference>
<dbReference type="PANTHER" id="PTHR11735">
    <property type="entry name" value="TRNA N6-ADENOSINE THREONYLCARBAMOYLTRANSFERASE"/>
    <property type="match status" value="1"/>
</dbReference>
<dbReference type="PANTHER" id="PTHR11735:SF6">
    <property type="entry name" value="TRNA N6-ADENOSINE THREONYLCARBAMOYLTRANSFERASE, MITOCHONDRIAL"/>
    <property type="match status" value="1"/>
</dbReference>
<dbReference type="Pfam" id="PF00814">
    <property type="entry name" value="TsaD"/>
    <property type="match status" value="1"/>
</dbReference>
<dbReference type="PRINTS" id="PR00789">
    <property type="entry name" value="OSIALOPTASE"/>
</dbReference>
<dbReference type="SUPFAM" id="SSF53067">
    <property type="entry name" value="Actin-like ATPase domain"/>
    <property type="match status" value="1"/>
</dbReference>
<gene>
    <name evidence="3" type="primary">Osgepl1</name>
</gene>
<organism>
    <name type="scientific">Rattus norvegicus</name>
    <name type="common">Rat</name>
    <dbReference type="NCBI Taxonomy" id="10116"/>
    <lineage>
        <taxon>Eukaryota</taxon>
        <taxon>Metazoa</taxon>
        <taxon>Chordata</taxon>
        <taxon>Craniata</taxon>
        <taxon>Vertebrata</taxon>
        <taxon>Euteleostomi</taxon>
        <taxon>Mammalia</taxon>
        <taxon>Eutheria</taxon>
        <taxon>Euarchontoglires</taxon>
        <taxon>Glires</taxon>
        <taxon>Rodentia</taxon>
        <taxon>Myomorpha</taxon>
        <taxon>Muroidea</taxon>
        <taxon>Muridae</taxon>
        <taxon>Murinae</taxon>
        <taxon>Rattus</taxon>
    </lineage>
</organism>
<sequence length="414" mass="44851">MLMLSKTAGAIPRPPRSNVRGFIRRFNVQPRALFHHKLVLGIETSCDDTAAAVVDETGNVLGEALHSQTEVHLKTGGIVPPVAQQLHRENIQRIVEEALSASGVSPSDLSAIATTIKPGLALSLGVGLSFSVQLVNQFKKPFIPIHHMEAHALTIRLTHKVGFPFLVLLISGGHCLLALVQSVSDFLLLGKSLDIAPGDMLDKVARRLSLIKHPECSTMSGGKAIEHLAKEGNRFHFTINPPMQNAKNCDFSFTGLQHVTDKLITHKEKEEGIEKGQILSSAADIAAAVQHATACHLAKRTHRAILFCQQKNLLSPANAVLVVSGGVASNLYIRRALEIVANATQCTLLCPPPRLCTDNGIMIAWNGIERLRAGLGILHDVEDIRYEPKCPLGIDISREVAEAAIKVPRLKMTL</sequence>
<keyword id="KW-0007">Acetylation</keyword>
<keyword id="KW-0012">Acyltransferase</keyword>
<keyword id="KW-0479">Metal-binding</keyword>
<keyword id="KW-0496">Mitochondrion</keyword>
<keyword id="KW-1185">Reference proteome</keyword>
<keyword id="KW-0808">Transferase</keyword>
<keyword id="KW-0809">Transit peptide</keyword>
<keyword id="KW-0819">tRNA processing</keyword>
<comment type="function">
    <text evidence="3">Required for the formation of a threonylcarbamoyl group on adenosine at position 37 (t(6)A37) in mitochondrial tRNAs that read codons beginning with adenine. Probably involved in the transfer of the threonylcarbamoyl moiety of threonylcarbamoyl-AMP (TC-AMP) to the N6 group of A37. Involved in mitochondrial genome maintenance.</text>
</comment>
<comment type="catalytic activity">
    <reaction evidence="3">
        <text>L-threonylcarbamoyladenylate + adenosine(37) in tRNA = N(6)-L-threonylcarbamoyladenosine(37) in tRNA + AMP + H(+)</text>
        <dbReference type="Rhea" id="RHEA:37059"/>
        <dbReference type="Rhea" id="RHEA-COMP:10162"/>
        <dbReference type="Rhea" id="RHEA-COMP:10163"/>
        <dbReference type="ChEBI" id="CHEBI:15378"/>
        <dbReference type="ChEBI" id="CHEBI:73682"/>
        <dbReference type="ChEBI" id="CHEBI:74411"/>
        <dbReference type="ChEBI" id="CHEBI:74418"/>
        <dbReference type="ChEBI" id="CHEBI:456215"/>
        <dbReference type="EC" id="2.3.1.234"/>
    </reaction>
</comment>
<comment type="cofactor">
    <cofactor evidence="3">
        <name>a divalent metal cation</name>
        <dbReference type="ChEBI" id="CHEBI:60240"/>
    </cofactor>
    <text evidence="3">Binds 1 divalent metal cation per subunit.</text>
</comment>
<comment type="subunit">
    <text evidence="3">Monomer.</text>
</comment>
<comment type="subcellular location">
    <subcellularLocation>
        <location evidence="3 4">Mitochondrion</location>
    </subcellularLocation>
</comment>
<comment type="similarity">
    <text evidence="3">Belongs to the KAE1 / TsaD family.</text>
</comment>
<evidence type="ECO:0000250" key="1">
    <source>
        <dbReference type="UniProtKB" id="Q6PEB4"/>
    </source>
</evidence>
<evidence type="ECO:0000250" key="2">
    <source>
        <dbReference type="UniProtKB" id="Q9H4B0"/>
    </source>
</evidence>
<evidence type="ECO:0000255" key="3">
    <source>
        <dbReference type="HAMAP-Rule" id="MF_03179"/>
    </source>
</evidence>
<evidence type="ECO:0000269" key="4">
    <source>
    </source>
</evidence>